<gene>
    <name evidence="1" type="primary">miaB</name>
    <name type="ordered locus">GbCGDNIH1_0118</name>
</gene>
<organism>
    <name type="scientific">Granulibacter bethesdensis (strain ATCC BAA-1260 / CGDNIH1)</name>
    <dbReference type="NCBI Taxonomy" id="391165"/>
    <lineage>
        <taxon>Bacteria</taxon>
        <taxon>Pseudomonadati</taxon>
        <taxon>Pseudomonadota</taxon>
        <taxon>Alphaproteobacteria</taxon>
        <taxon>Acetobacterales</taxon>
        <taxon>Acetobacteraceae</taxon>
        <taxon>Granulibacter</taxon>
    </lineage>
</organism>
<protein>
    <recommendedName>
        <fullName evidence="1">tRNA-2-methylthio-N(6)-dimethylallyladenosine synthase</fullName>
        <ecNumber evidence="1">2.8.4.3</ecNumber>
    </recommendedName>
    <alternativeName>
        <fullName evidence="1">(Dimethylallyl)adenosine tRNA methylthiotransferase MiaB</fullName>
    </alternativeName>
    <alternativeName>
        <fullName evidence="1">tRNA-i(6)A37 methylthiotransferase</fullName>
    </alternativeName>
</protein>
<sequence>MPMTGLLQTTLSTADQDRSGPAATTGDTPARANTKRLHVITWGCQMNVYDSARMTDVLSPLGYTAHAEPEGADMIVLNTCHIRDKATEKVFSELGRLRLLKEARAREGQPMLLAVAGCVAQAEGEQILARAPYVDIVLGPQTYHRLGGMVRRAMNGERVIETDFPPEDKFDYLPEAAAPQHGPGLAGGRTAFLTIQEGCDKFCSFCVVPYTRGAEVSRPASSVLAEARRMVRGGAREITLLGQNVNAYHGLGEDGEVWTLARLIRALADIPDLLRIRYTTSHPRDVSDDLIAAHRDIPQLMPFLHLPVQSGSDRILAAMNRRHTAEDYFRVVDRLREARPDLALSSDFIVGHPGETDEDFEDTMRLIERVGFAQAYSFKYSPRPGTPAAERDNHVPEPVMDERLQRLQALLRTQQEAFNTACIGKTVNVLLVTPGRHPGQIGGRSPWLQAVHLDAPATLIGQEVPVTITAAHTNSLSATLPDCAPHPKELTCA</sequence>
<dbReference type="EC" id="2.8.4.3" evidence="1"/>
<dbReference type="EMBL" id="CP000394">
    <property type="protein sequence ID" value="ABI61016.1"/>
    <property type="molecule type" value="Genomic_DNA"/>
</dbReference>
<dbReference type="SMR" id="Q0BVY6"/>
<dbReference type="STRING" id="391165.GbCGDNIH1_0118"/>
<dbReference type="KEGG" id="gbe:GbCGDNIH1_0118"/>
<dbReference type="eggNOG" id="COG0621">
    <property type="taxonomic scope" value="Bacteria"/>
</dbReference>
<dbReference type="HOGENOM" id="CLU_018697_2_2_5"/>
<dbReference type="Proteomes" id="UP000001963">
    <property type="component" value="Chromosome"/>
</dbReference>
<dbReference type="GO" id="GO:0005829">
    <property type="term" value="C:cytosol"/>
    <property type="evidence" value="ECO:0007669"/>
    <property type="project" value="TreeGrafter"/>
</dbReference>
<dbReference type="GO" id="GO:0051539">
    <property type="term" value="F:4 iron, 4 sulfur cluster binding"/>
    <property type="evidence" value="ECO:0007669"/>
    <property type="project" value="UniProtKB-UniRule"/>
</dbReference>
<dbReference type="GO" id="GO:0046872">
    <property type="term" value="F:metal ion binding"/>
    <property type="evidence" value="ECO:0007669"/>
    <property type="project" value="UniProtKB-KW"/>
</dbReference>
<dbReference type="GO" id="GO:0035597">
    <property type="term" value="F:N6-isopentenyladenosine methylthiotransferase activity"/>
    <property type="evidence" value="ECO:0007669"/>
    <property type="project" value="TreeGrafter"/>
</dbReference>
<dbReference type="CDD" id="cd01335">
    <property type="entry name" value="Radical_SAM"/>
    <property type="match status" value="1"/>
</dbReference>
<dbReference type="FunFam" id="3.40.50.12160:FF:000003">
    <property type="entry name" value="CDK5 regulatory subunit-associated protein 1"/>
    <property type="match status" value="1"/>
</dbReference>
<dbReference type="FunFam" id="3.80.30.20:FF:000001">
    <property type="entry name" value="tRNA-2-methylthio-N(6)-dimethylallyladenosine synthase 2"/>
    <property type="match status" value="1"/>
</dbReference>
<dbReference type="Gene3D" id="3.40.50.12160">
    <property type="entry name" value="Methylthiotransferase, N-terminal domain"/>
    <property type="match status" value="1"/>
</dbReference>
<dbReference type="Gene3D" id="3.80.30.20">
    <property type="entry name" value="tm_1862 like domain"/>
    <property type="match status" value="1"/>
</dbReference>
<dbReference type="HAMAP" id="MF_01864">
    <property type="entry name" value="tRNA_metthiotr_MiaB"/>
    <property type="match status" value="1"/>
</dbReference>
<dbReference type="InterPro" id="IPR006638">
    <property type="entry name" value="Elp3/MiaA/NifB-like_rSAM"/>
</dbReference>
<dbReference type="InterPro" id="IPR005839">
    <property type="entry name" value="Methylthiotransferase"/>
</dbReference>
<dbReference type="InterPro" id="IPR020612">
    <property type="entry name" value="Methylthiotransferase_CS"/>
</dbReference>
<dbReference type="InterPro" id="IPR013848">
    <property type="entry name" value="Methylthiotransferase_N"/>
</dbReference>
<dbReference type="InterPro" id="IPR038135">
    <property type="entry name" value="Methylthiotransferase_N_sf"/>
</dbReference>
<dbReference type="InterPro" id="IPR006463">
    <property type="entry name" value="MiaB_methiolase"/>
</dbReference>
<dbReference type="InterPro" id="IPR007197">
    <property type="entry name" value="rSAM"/>
</dbReference>
<dbReference type="InterPro" id="IPR023404">
    <property type="entry name" value="rSAM_horseshoe"/>
</dbReference>
<dbReference type="InterPro" id="IPR002792">
    <property type="entry name" value="TRAM_dom"/>
</dbReference>
<dbReference type="NCBIfam" id="TIGR01574">
    <property type="entry name" value="miaB-methiolase"/>
    <property type="match status" value="1"/>
</dbReference>
<dbReference type="NCBIfam" id="TIGR00089">
    <property type="entry name" value="MiaB/RimO family radical SAM methylthiotransferase"/>
    <property type="match status" value="1"/>
</dbReference>
<dbReference type="PANTHER" id="PTHR43020">
    <property type="entry name" value="CDK5 REGULATORY SUBUNIT-ASSOCIATED PROTEIN 1"/>
    <property type="match status" value="1"/>
</dbReference>
<dbReference type="PANTHER" id="PTHR43020:SF2">
    <property type="entry name" value="MITOCHONDRIAL TRNA METHYLTHIOTRANSFERASE CDK5RAP1"/>
    <property type="match status" value="1"/>
</dbReference>
<dbReference type="Pfam" id="PF04055">
    <property type="entry name" value="Radical_SAM"/>
    <property type="match status" value="1"/>
</dbReference>
<dbReference type="Pfam" id="PF01938">
    <property type="entry name" value="TRAM"/>
    <property type="match status" value="1"/>
</dbReference>
<dbReference type="Pfam" id="PF00919">
    <property type="entry name" value="UPF0004"/>
    <property type="match status" value="1"/>
</dbReference>
<dbReference type="SFLD" id="SFLDF00273">
    <property type="entry name" value="(dimethylallyl)adenosine_tRNA"/>
    <property type="match status" value="1"/>
</dbReference>
<dbReference type="SFLD" id="SFLDG01082">
    <property type="entry name" value="B12-binding_domain_containing"/>
    <property type="match status" value="1"/>
</dbReference>
<dbReference type="SFLD" id="SFLDG01061">
    <property type="entry name" value="methylthiotransferase"/>
    <property type="match status" value="1"/>
</dbReference>
<dbReference type="SMART" id="SM00729">
    <property type="entry name" value="Elp3"/>
    <property type="match status" value="1"/>
</dbReference>
<dbReference type="SUPFAM" id="SSF102114">
    <property type="entry name" value="Radical SAM enzymes"/>
    <property type="match status" value="1"/>
</dbReference>
<dbReference type="PROSITE" id="PS51449">
    <property type="entry name" value="MTTASE_N"/>
    <property type="match status" value="1"/>
</dbReference>
<dbReference type="PROSITE" id="PS01278">
    <property type="entry name" value="MTTASE_RADICAL"/>
    <property type="match status" value="1"/>
</dbReference>
<dbReference type="PROSITE" id="PS51918">
    <property type="entry name" value="RADICAL_SAM"/>
    <property type="match status" value="1"/>
</dbReference>
<dbReference type="PROSITE" id="PS50926">
    <property type="entry name" value="TRAM"/>
    <property type="match status" value="1"/>
</dbReference>
<evidence type="ECO:0000255" key="1">
    <source>
        <dbReference type="HAMAP-Rule" id="MF_01864"/>
    </source>
</evidence>
<evidence type="ECO:0000255" key="2">
    <source>
        <dbReference type="PROSITE-ProRule" id="PRU01266"/>
    </source>
</evidence>
<evidence type="ECO:0000256" key="3">
    <source>
        <dbReference type="SAM" id="MobiDB-lite"/>
    </source>
</evidence>
<accession>Q0BVY6</accession>
<proteinExistence type="inferred from homology"/>
<reference key="1">
    <citation type="journal article" date="2007" name="J. Bacteriol.">
        <title>Genome sequence analysis of the emerging human pathogenic acetic acid bacterium Granulibacter bethesdensis.</title>
        <authorList>
            <person name="Greenberg D.E."/>
            <person name="Porcella S.F."/>
            <person name="Zelazny A.M."/>
            <person name="Virtaneva K."/>
            <person name="Sturdevant D.E."/>
            <person name="Kupko J.J. III"/>
            <person name="Barbian K.D."/>
            <person name="Babar A."/>
            <person name="Dorward D.W."/>
            <person name="Holland S.M."/>
        </authorList>
    </citation>
    <scope>NUCLEOTIDE SEQUENCE [LARGE SCALE GENOMIC DNA]</scope>
    <source>
        <strain>ATCC BAA-1260 / CGDNIH1</strain>
    </source>
</reference>
<keyword id="KW-0004">4Fe-4S</keyword>
<keyword id="KW-0963">Cytoplasm</keyword>
<keyword id="KW-0408">Iron</keyword>
<keyword id="KW-0411">Iron-sulfur</keyword>
<keyword id="KW-0479">Metal-binding</keyword>
<keyword id="KW-1185">Reference proteome</keyword>
<keyword id="KW-0949">S-adenosyl-L-methionine</keyword>
<keyword id="KW-0808">Transferase</keyword>
<keyword id="KW-0819">tRNA processing</keyword>
<feature type="chain" id="PRO_0000374326" description="tRNA-2-methylthio-N(6)-dimethylallyladenosine synthase">
    <location>
        <begin position="1"/>
        <end position="493"/>
    </location>
</feature>
<feature type="domain" description="MTTase N-terminal" evidence="1">
    <location>
        <begin position="35"/>
        <end position="155"/>
    </location>
</feature>
<feature type="domain" description="Radical SAM core" evidence="2">
    <location>
        <begin position="185"/>
        <end position="417"/>
    </location>
</feature>
<feature type="domain" description="TRAM" evidence="1">
    <location>
        <begin position="420"/>
        <end position="482"/>
    </location>
</feature>
<feature type="region of interest" description="Disordered" evidence="3">
    <location>
        <begin position="1"/>
        <end position="31"/>
    </location>
</feature>
<feature type="compositionally biased region" description="Polar residues" evidence="3">
    <location>
        <begin position="1"/>
        <end position="14"/>
    </location>
</feature>
<feature type="binding site" evidence="1">
    <location>
        <position position="44"/>
    </location>
    <ligand>
        <name>[4Fe-4S] cluster</name>
        <dbReference type="ChEBI" id="CHEBI:49883"/>
        <label>1</label>
    </ligand>
</feature>
<feature type="binding site" evidence="1">
    <location>
        <position position="80"/>
    </location>
    <ligand>
        <name>[4Fe-4S] cluster</name>
        <dbReference type="ChEBI" id="CHEBI:49883"/>
        <label>1</label>
    </ligand>
</feature>
<feature type="binding site" evidence="1">
    <location>
        <position position="118"/>
    </location>
    <ligand>
        <name>[4Fe-4S] cluster</name>
        <dbReference type="ChEBI" id="CHEBI:49883"/>
        <label>1</label>
    </ligand>
</feature>
<feature type="binding site" evidence="1">
    <location>
        <position position="199"/>
    </location>
    <ligand>
        <name>[4Fe-4S] cluster</name>
        <dbReference type="ChEBI" id="CHEBI:49883"/>
        <label>2</label>
        <note>4Fe-4S-S-AdoMet</note>
    </ligand>
</feature>
<feature type="binding site" evidence="1">
    <location>
        <position position="203"/>
    </location>
    <ligand>
        <name>[4Fe-4S] cluster</name>
        <dbReference type="ChEBI" id="CHEBI:49883"/>
        <label>2</label>
        <note>4Fe-4S-S-AdoMet</note>
    </ligand>
</feature>
<feature type="binding site" evidence="1">
    <location>
        <position position="206"/>
    </location>
    <ligand>
        <name>[4Fe-4S] cluster</name>
        <dbReference type="ChEBI" id="CHEBI:49883"/>
        <label>2</label>
        <note>4Fe-4S-S-AdoMet</note>
    </ligand>
</feature>
<comment type="function">
    <text evidence="1">Catalyzes the methylthiolation of N6-(dimethylallyl)adenosine (i(6)A), leading to the formation of 2-methylthio-N6-(dimethylallyl)adenosine (ms(2)i(6)A) at position 37 in tRNAs that read codons beginning with uridine.</text>
</comment>
<comment type="catalytic activity">
    <reaction evidence="1">
        <text>N(6)-dimethylallyladenosine(37) in tRNA + (sulfur carrier)-SH + AH2 + 2 S-adenosyl-L-methionine = 2-methylsulfanyl-N(6)-dimethylallyladenosine(37) in tRNA + (sulfur carrier)-H + 5'-deoxyadenosine + L-methionine + A + S-adenosyl-L-homocysteine + 2 H(+)</text>
        <dbReference type="Rhea" id="RHEA:37067"/>
        <dbReference type="Rhea" id="RHEA-COMP:10375"/>
        <dbReference type="Rhea" id="RHEA-COMP:10376"/>
        <dbReference type="Rhea" id="RHEA-COMP:14737"/>
        <dbReference type="Rhea" id="RHEA-COMP:14739"/>
        <dbReference type="ChEBI" id="CHEBI:13193"/>
        <dbReference type="ChEBI" id="CHEBI:15378"/>
        <dbReference type="ChEBI" id="CHEBI:17319"/>
        <dbReference type="ChEBI" id="CHEBI:17499"/>
        <dbReference type="ChEBI" id="CHEBI:29917"/>
        <dbReference type="ChEBI" id="CHEBI:57844"/>
        <dbReference type="ChEBI" id="CHEBI:57856"/>
        <dbReference type="ChEBI" id="CHEBI:59789"/>
        <dbReference type="ChEBI" id="CHEBI:64428"/>
        <dbReference type="ChEBI" id="CHEBI:74415"/>
        <dbReference type="ChEBI" id="CHEBI:74417"/>
        <dbReference type="EC" id="2.8.4.3"/>
    </reaction>
</comment>
<comment type="cofactor">
    <cofactor evidence="1">
        <name>[4Fe-4S] cluster</name>
        <dbReference type="ChEBI" id="CHEBI:49883"/>
    </cofactor>
    <text evidence="1">Binds 2 [4Fe-4S] clusters. One cluster is coordinated with 3 cysteines and an exchangeable S-adenosyl-L-methionine.</text>
</comment>
<comment type="subunit">
    <text evidence="1">Monomer.</text>
</comment>
<comment type="subcellular location">
    <subcellularLocation>
        <location evidence="1">Cytoplasm</location>
    </subcellularLocation>
</comment>
<comment type="similarity">
    <text evidence="1">Belongs to the methylthiotransferase family. MiaB subfamily.</text>
</comment>
<name>MIAB_GRABC</name>